<keyword id="KW-1015">Disulfide bond</keyword>
<keyword id="KW-0255">Endonuclease</keyword>
<keyword id="KW-0378">Hydrolase</keyword>
<keyword id="KW-0460">Magnesium</keyword>
<keyword id="KW-0464">Manganese</keyword>
<keyword id="KW-0479">Metal-binding</keyword>
<keyword id="KW-0496">Mitochondrion</keyword>
<keyword id="KW-0540">Nuclease</keyword>
<keyword id="KW-0597">Phosphoprotein</keyword>
<keyword id="KW-1267">Proteomics identification</keyword>
<keyword id="KW-1185">Reference proteome</keyword>
<keyword id="KW-0809">Transit peptide</keyword>
<accession>Q14249</accession>
<accession>Q5T281</accession>
<accession>Q9BSP2</accession>
<organism>
    <name type="scientific">Homo sapiens</name>
    <name type="common">Human</name>
    <dbReference type="NCBI Taxonomy" id="9606"/>
    <lineage>
        <taxon>Eukaryota</taxon>
        <taxon>Metazoa</taxon>
        <taxon>Chordata</taxon>
        <taxon>Craniata</taxon>
        <taxon>Vertebrata</taxon>
        <taxon>Euteleostomi</taxon>
        <taxon>Mammalia</taxon>
        <taxon>Eutheria</taxon>
        <taxon>Euarchontoglires</taxon>
        <taxon>Primates</taxon>
        <taxon>Haplorrhini</taxon>
        <taxon>Catarrhini</taxon>
        <taxon>Hominidae</taxon>
        <taxon>Homo</taxon>
    </lineage>
</organism>
<protein>
    <recommendedName>
        <fullName>Endonuclease G, mitochondrial</fullName>
        <shortName>Endo G</shortName>
        <ecNumber>3.1.30.-</ecNumber>
    </recommendedName>
</protein>
<dbReference type="EC" id="3.1.30.-"/>
<dbReference type="EMBL" id="X79444">
    <property type="protein sequence ID" value="CAA55963.1"/>
    <property type="molecule type" value="mRNA"/>
</dbReference>
<dbReference type="EMBL" id="AL441992">
    <property type="status" value="NOT_ANNOTATED_CDS"/>
    <property type="molecule type" value="Genomic_DNA"/>
</dbReference>
<dbReference type="EMBL" id="BC004922">
    <property type="protein sequence ID" value="AAH04922.1"/>
    <property type="molecule type" value="mRNA"/>
</dbReference>
<dbReference type="EMBL" id="BC016351">
    <property type="protein sequence ID" value="AAH16351.1"/>
    <property type="molecule type" value="mRNA"/>
</dbReference>
<dbReference type="CCDS" id="CCDS6912.1"/>
<dbReference type="PIR" id="T09542">
    <property type="entry name" value="T09542"/>
</dbReference>
<dbReference type="RefSeq" id="NP_004426.2">
    <property type="nucleotide sequence ID" value="NM_004435.2"/>
</dbReference>
<dbReference type="SMR" id="Q14249"/>
<dbReference type="BioGRID" id="108336">
    <property type="interactions" value="82"/>
</dbReference>
<dbReference type="FunCoup" id="Q14249">
    <property type="interactions" value="1284"/>
</dbReference>
<dbReference type="IntAct" id="Q14249">
    <property type="interactions" value="42"/>
</dbReference>
<dbReference type="MINT" id="Q14249"/>
<dbReference type="STRING" id="9606.ENSP00000361725"/>
<dbReference type="ChEMBL" id="CHEMBL3804749"/>
<dbReference type="iPTMnet" id="Q14249"/>
<dbReference type="PhosphoSitePlus" id="Q14249"/>
<dbReference type="BioMuta" id="ENDOG"/>
<dbReference type="DMDM" id="317373579"/>
<dbReference type="jPOST" id="Q14249"/>
<dbReference type="MassIVE" id="Q14249"/>
<dbReference type="PaxDb" id="9606-ENSP00000361725"/>
<dbReference type="PeptideAtlas" id="Q14249"/>
<dbReference type="ProteomicsDB" id="59950"/>
<dbReference type="Pumba" id="Q14249"/>
<dbReference type="Antibodypedia" id="17709">
    <property type="antibodies" value="485 antibodies from 40 providers"/>
</dbReference>
<dbReference type="DNASU" id="2021"/>
<dbReference type="Ensembl" id="ENST00000372642.5">
    <property type="protein sequence ID" value="ENSP00000361725.4"/>
    <property type="gene ID" value="ENSG00000167136.7"/>
</dbReference>
<dbReference type="GeneID" id="2021"/>
<dbReference type="KEGG" id="hsa:2021"/>
<dbReference type="MANE-Select" id="ENST00000372642.5">
    <property type="protein sequence ID" value="ENSP00000361725.4"/>
    <property type="RefSeq nucleotide sequence ID" value="NM_004435.2"/>
    <property type="RefSeq protein sequence ID" value="NP_004426.2"/>
</dbReference>
<dbReference type="UCSC" id="uc004bwc.4">
    <property type="organism name" value="human"/>
</dbReference>
<dbReference type="AGR" id="HGNC:3346"/>
<dbReference type="CTD" id="2021"/>
<dbReference type="DisGeNET" id="2021"/>
<dbReference type="GeneCards" id="ENDOG"/>
<dbReference type="HGNC" id="HGNC:3346">
    <property type="gene designation" value="ENDOG"/>
</dbReference>
<dbReference type="HPA" id="ENSG00000167136">
    <property type="expression patterns" value="Tissue enhanced (skeletal)"/>
</dbReference>
<dbReference type="MIM" id="600440">
    <property type="type" value="gene"/>
</dbReference>
<dbReference type="neXtProt" id="NX_Q14249"/>
<dbReference type="OpenTargets" id="ENSG00000167136"/>
<dbReference type="PharmGKB" id="PA27783"/>
<dbReference type="VEuPathDB" id="HostDB:ENSG00000167136"/>
<dbReference type="eggNOG" id="KOG3721">
    <property type="taxonomic scope" value="Eukaryota"/>
</dbReference>
<dbReference type="GeneTree" id="ENSGT00940000160987"/>
<dbReference type="HOGENOM" id="CLU_055174_0_1_1"/>
<dbReference type="InParanoid" id="Q14249"/>
<dbReference type="OMA" id="YVMPNQV"/>
<dbReference type="OrthoDB" id="5418055at2759"/>
<dbReference type="PAN-GO" id="Q14249">
    <property type="GO annotations" value="5 GO annotations based on evolutionary models"/>
</dbReference>
<dbReference type="PhylomeDB" id="Q14249"/>
<dbReference type="TreeFam" id="TF105386"/>
<dbReference type="PathwayCommons" id="Q14249"/>
<dbReference type="SignaLink" id="Q14249"/>
<dbReference type="SIGNOR" id="Q14249"/>
<dbReference type="BioGRID-ORCS" id="2021">
    <property type="hits" value="40 hits in 1157 CRISPR screens"/>
</dbReference>
<dbReference type="GeneWiki" id="ENDOG"/>
<dbReference type="GenomeRNAi" id="2021"/>
<dbReference type="Pharos" id="Q14249">
    <property type="development level" value="Tbio"/>
</dbReference>
<dbReference type="PRO" id="PR:Q14249"/>
<dbReference type="Proteomes" id="UP000005640">
    <property type="component" value="Chromosome 9"/>
</dbReference>
<dbReference type="RNAct" id="Q14249">
    <property type="molecule type" value="protein"/>
</dbReference>
<dbReference type="Bgee" id="ENSG00000167136">
    <property type="expression patterns" value="Expressed in hindlimb stylopod muscle and 178 other cell types or tissues"/>
</dbReference>
<dbReference type="ExpressionAtlas" id="Q14249">
    <property type="expression patterns" value="baseline and differential"/>
</dbReference>
<dbReference type="GO" id="GO:0005743">
    <property type="term" value="C:mitochondrial inner membrane"/>
    <property type="evidence" value="ECO:0000318"/>
    <property type="project" value="GO_Central"/>
</dbReference>
<dbReference type="GO" id="GO:0005739">
    <property type="term" value="C:mitochondrion"/>
    <property type="evidence" value="ECO:0000314"/>
    <property type="project" value="UniProtKB"/>
</dbReference>
<dbReference type="GO" id="GO:0005634">
    <property type="term" value="C:nucleus"/>
    <property type="evidence" value="ECO:0000318"/>
    <property type="project" value="GO_Central"/>
</dbReference>
<dbReference type="GO" id="GO:0043204">
    <property type="term" value="C:perikaryon"/>
    <property type="evidence" value="ECO:0007669"/>
    <property type="project" value="Ensembl"/>
</dbReference>
<dbReference type="GO" id="GO:0048471">
    <property type="term" value="C:perinuclear region of cytoplasm"/>
    <property type="evidence" value="ECO:0007669"/>
    <property type="project" value="Ensembl"/>
</dbReference>
<dbReference type="GO" id="GO:0004520">
    <property type="term" value="F:DNA endonuclease activity"/>
    <property type="evidence" value="ECO:0000315"/>
    <property type="project" value="UniProtKB"/>
</dbReference>
<dbReference type="GO" id="GO:0000287">
    <property type="term" value="F:magnesium ion binding"/>
    <property type="evidence" value="ECO:0000250"/>
    <property type="project" value="UniProtKB"/>
</dbReference>
<dbReference type="GO" id="GO:0003676">
    <property type="term" value="F:nucleic acid binding"/>
    <property type="evidence" value="ECO:0007669"/>
    <property type="project" value="InterPro"/>
</dbReference>
<dbReference type="GO" id="GO:0042803">
    <property type="term" value="F:protein homodimerization activity"/>
    <property type="evidence" value="ECO:0000250"/>
    <property type="project" value="UniProtKB"/>
</dbReference>
<dbReference type="GO" id="GO:0004521">
    <property type="term" value="F:RNA endonuclease activity"/>
    <property type="evidence" value="ECO:0000318"/>
    <property type="project" value="GO_Central"/>
</dbReference>
<dbReference type="GO" id="GO:0000014">
    <property type="term" value="F:single-stranded DNA endodeoxyribonuclease activity"/>
    <property type="evidence" value="ECO:0000318"/>
    <property type="project" value="GO_Central"/>
</dbReference>
<dbReference type="GO" id="GO:0006309">
    <property type="term" value="P:apoptotic DNA fragmentation"/>
    <property type="evidence" value="ECO:0000318"/>
    <property type="project" value="GO_Central"/>
</dbReference>
<dbReference type="GO" id="GO:0071277">
    <property type="term" value="P:cellular response to calcium ion"/>
    <property type="evidence" value="ECO:0007669"/>
    <property type="project" value="Ensembl"/>
</dbReference>
<dbReference type="GO" id="GO:0071333">
    <property type="term" value="P:cellular response to glucose stimulus"/>
    <property type="evidence" value="ECO:0007669"/>
    <property type="project" value="Ensembl"/>
</dbReference>
<dbReference type="GO" id="GO:0071456">
    <property type="term" value="P:cellular response to hypoxia"/>
    <property type="evidence" value="ECO:0007669"/>
    <property type="project" value="Ensembl"/>
</dbReference>
<dbReference type="GO" id="GO:0034599">
    <property type="term" value="P:cellular response to oxidative stress"/>
    <property type="evidence" value="ECO:0007669"/>
    <property type="project" value="Ensembl"/>
</dbReference>
<dbReference type="GO" id="GO:0006974">
    <property type="term" value="P:DNA damage response"/>
    <property type="evidence" value="ECO:0000315"/>
    <property type="project" value="UniProtKB"/>
</dbReference>
<dbReference type="GO" id="GO:0006310">
    <property type="term" value="P:DNA recombination"/>
    <property type="evidence" value="ECO:0000304"/>
    <property type="project" value="UniProtKB"/>
</dbReference>
<dbReference type="GO" id="GO:0001701">
    <property type="term" value="P:in utero embryonic development"/>
    <property type="evidence" value="ECO:0007669"/>
    <property type="project" value="Ensembl"/>
</dbReference>
<dbReference type="GO" id="GO:0032043">
    <property type="term" value="P:mitochondrial DNA catabolic process"/>
    <property type="evidence" value="ECO:0000315"/>
    <property type="project" value="UniProtKB"/>
</dbReference>
<dbReference type="GO" id="GO:0032007">
    <property type="term" value="P:negative regulation of TOR signaling"/>
    <property type="evidence" value="ECO:0000315"/>
    <property type="project" value="UniProtKB"/>
</dbReference>
<dbReference type="GO" id="GO:1902512">
    <property type="term" value="P:positive regulation of apoptotic DNA fragmentation"/>
    <property type="evidence" value="ECO:0007669"/>
    <property type="project" value="Ensembl"/>
</dbReference>
<dbReference type="GO" id="GO:0043065">
    <property type="term" value="P:positive regulation of apoptotic process"/>
    <property type="evidence" value="ECO:0007669"/>
    <property type="project" value="Ensembl"/>
</dbReference>
<dbReference type="GO" id="GO:0010508">
    <property type="term" value="P:positive regulation of autophagy"/>
    <property type="evidence" value="ECO:0000315"/>
    <property type="project" value="UniProtKB"/>
</dbReference>
<dbReference type="GO" id="GO:1901300">
    <property type="term" value="P:positive regulation of hydrogen peroxide-mediated programmed cell death"/>
    <property type="evidence" value="ECO:0007669"/>
    <property type="project" value="Ensembl"/>
</dbReference>
<dbReference type="GO" id="GO:0090297">
    <property type="term" value="P:positive regulation of mitochondrial DNA replication"/>
    <property type="evidence" value="ECO:0000315"/>
    <property type="project" value="UniProtKB"/>
</dbReference>
<dbReference type="GO" id="GO:0046677">
    <property type="term" value="P:response to antibiotic"/>
    <property type="evidence" value="ECO:0007669"/>
    <property type="project" value="Ensembl"/>
</dbReference>
<dbReference type="GO" id="GO:0032355">
    <property type="term" value="P:response to estradiol"/>
    <property type="evidence" value="ECO:0007669"/>
    <property type="project" value="Ensembl"/>
</dbReference>
<dbReference type="GO" id="GO:0009612">
    <property type="term" value="P:response to mechanical stimulus"/>
    <property type="evidence" value="ECO:0007669"/>
    <property type="project" value="Ensembl"/>
</dbReference>
<dbReference type="GO" id="GO:0034612">
    <property type="term" value="P:response to tumor necrosis factor"/>
    <property type="evidence" value="ECO:0007669"/>
    <property type="project" value="Ensembl"/>
</dbReference>
<dbReference type="CDD" id="cd00091">
    <property type="entry name" value="NUC"/>
    <property type="match status" value="1"/>
</dbReference>
<dbReference type="FunFam" id="3.40.570.10:FF:000002">
    <property type="entry name" value="Endonuclease G, mitochondrial"/>
    <property type="match status" value="1"/>
</dbReference>
<dbReference type="Gene3D" id="3.40.570.10">
    <property type="entry name" value="Extracellular Endonuclease, subunit A"/>
    <property type="match status" value="1"/>
</dbReference>
<dbReference type="InterPro" id="IPR018524">
    <property type="entry name" value="DNA/RNA_endonuclease_AS"/>
</dbReference>
<dbReference type="InterPro" id="IPR044929">
    <property type="entry name" value="DNA/RNA_non-sp_Endonuclease_sf"/>
</dbReference>
<dbReference type="InterPro" id="IPR001604">
    <property type="entry name" value="Endo_G_ENPP1-like_dom"/>
</dbReference>
<dbReference type="InterPro" id="IPR020821">
    <property type="entry name" value="ENPP1-3/EXOG-like_nuc-like"/>
</dbReference>
<dbReference type="InterPro" id="IPR044925">
    <property type="entry name" value="His-Me_finger_sf"/>
</dbReference>
<dbReference type="InterPro" id="IPR040255">
    <property type="entry name" value="Non-specific_endonuclease"/>
</dbReference>
<dbReference type="PANTHER" id="PTHR13966:SF5">
    <property type="entry name" value="ENDONUCLEASE G, MITOCHONDRIAL"/>
    <property type="match status" value="1"/>
</dbReference>
<dbReference type="PANTHER" id="PTHR13966">
    <property type="entry name" value="ENDONUCLEASE RELATED"/>
    <property type="match status" value="1"/>
</dbReference>
<dbReference type="Pfam" id="PF01223">
    <property type="entry name" value="Endonuclease_NS"/>
    <property type="match status" value="1"/>
</dbReference>
<dbReference type="SMART" id="SM00892">
    <property type="entry name" value="Endonuclease_NS"/>
    <property type="match status" value="1"/>
</dbReference>
<dbReference type="SMART" id="SM00477">
    <property type="entry name" value="NUC"/>
    <property type="match status" value="1"/>
</dbReference>
<dbReference type="SUPFAM" id="SSF54060">
    <property type="entry name" value="His-Me finger endonucleases"/>
    <property type="match status" value="1"/>
</dbReference>
<dbReference type="PROSITE" id="PS01070">
    <property type="entry name" value="NUCLEASE_NON_SPEC"/>
    <property type="match status" value="1"/>
</dbReference>
<comment type="function">
    <text evidence="2 5 6 7">Endonuclease that preferentially catalyzes the cleavage of double-stranded 5-hydroxymethylcytosine (5hmC)-modified DNA (PubMed:25355512). The 5hmC-modified nucleotide does not increase the binding affinity, but instead increases the efficiency of cutting and specifies the site of cleavage for the modified DNAs (By similarity). Shows significantly higher affinity for four-stranded Holliday junction over duplex and single-stranded DNAs (By similarity). Promotes conservative recombination when the DNA is 5hmC-modified (PubMed:25355512). Promotes autophagy through the suppression of mTOR by its phosphorylation-mediated interaction with YWHAG and its endonuclease activity-mediated DNA damage response (PubMed:33473107). GSK3-beta mediated phosphorylation of ENDOG enhances its interaction with YWHAG, leading to the release of TSC2 and PIK3C3 from YWHAG resulting in mTOR pathway suppression and autophagy initiation (PubMed:33473107). Promotes cleavage of mtDNA in response to oxidative and nitrosative stress, in turn inducing compensatory mtDNA replication (PubMed:29719607).</text>
</comment>
<comment type="cofactor">
    <cofactor evidence="2">
        <name>Mg(2+)</name>
        <dbReference type="ChEBI" id="CHEBI:18420"/>
    </cofactor>
</comment>
<comment type="subunit">
    <text evidence="2 7">Homodimer; disulfide-linked (By similarity). Homodimerization is essential for enzyme activity (By similarity). Interacts with YWHAG (PubMed:33473107).</text>
</comment>
<comment type="interaction">
    <interactant intactId="EBI-9369928">
        <id>Q14249</id>
    </interactant>
    <interactant intactId="EBI-2555157">
        <id>Q8WW22</id>
        <label>DNAJA4</label>
    </interactant>
    <organismsDiffer>false</organismsDiffer>
    <experiments>2</experiments>
</comment>
<comment type="interaction">
    <interactant intactId="EBI-9369928">
        <id>Q14249</id>
    </interactant>
    <interactant intactId="EBI-21798491">
        <id>Q8WWU7</id>
        <label>ITLN2</label>
    </interactant>
    <organismsDiffer>false</organismsDiffer>
    <experiments>3</experiments>
</comment>
<comment type="subcellular location">
    <subcellularLocation>
        <location evidence="7">Mitochondrion</location>
    </subcellularLocation>
</comment>
<comment type="PTM">
    <text evidence="7">GSK3-beta-mediated dual phosphorylations at Thr-128 and Ser-288 is necessary for its interaction with YWHAG and the induction of autophagy.</text>
</comment>
<comment type="similarity">
    <text evidence="8">Belongs to the DNA/RNA non-specific endonuclease family.</text>
</comment>
<proteinExistence type="evidence at protein level"/>
<name>NUCG_HUMAN</name>
<evidence type="ECO:0000250" key="1"/>
<evidence type="ECO:0000250" key="2">
    <source>
        <dbReference type="UniProtKB" id="O08600"/>
    </source>
</evidence>
<evidence type="ECO:0000255" key="3">
    <source>
        <dbReference type="PROSITE-ProRule" id="PRU10047"/>
    </source>
</evidence>
<evidence type="ECO:0000269" key="4">
    <source>
    </source>
</evidence>
<evidence type="ECO:0000269" key="5">
    <source>
    </source>
</evidence>
<evidence type="ECO:0000269" key="6">
    <source>
    </source>
</evidence>
<evidence type="ECO:0000269" key="7">
    <source>
    </source>
</evidence>
<evidence type="ECO:0000305" key="8"/>
<feature type="transit peptide" description="Mitochondrion" evidence="1">
    <location>
        <begin position="1"/>
        <end position="48"/>
    </location>
</feature>
<feature type="chain" id="PRO_0000019918" description="Endonuclease G, mitochondrial">
    <location>
        <begin position="49"/>
        <end position="297"/>
    </location>
</feature>
<feature type="region of interest" description="Essential for deoxyribonuclease activity" evidence="2">
    <location>
        <begin position="286"/>
        <end position="296"/>
    </location>
</feature>
<feature type="active site" description="Proton acceptor" evidence="3">
    <location>
        <position position="141"/>
    </location>
</feature>
<feature type="binding site" evidence="2">
    <location>
        <position position="172"/>
    </location>
    <ligand>
        <name>Mg(2+)</name>
        <dbReference type="ChEBI" id="CHEBI:18420"/>
        <note>catalytic</note>
    </ligand>
</feature>
<feature type="site" description="Essential for catalytic activity" evidence="2">
    <location>
        <position position="110"/>
    </location>
</feature>
<feature type="modified residue" description="Phosphothreonine; by GSK3-beta" evidence="7">
    <location>
        <position position="128"/>
    </location>
</feature>
<feature type="modified residue" description="Phosphoserine; by GSK3-beta" evidence="7">
    <location>
        <position position="288"/>
    </location>
</feature>
<feature type="disulfide bond" description="Interchain" evidence="2">
    <location>
        <position position="113"/>
    </location>
</feature>
<feature type="sequence variant" id="VAR_031691" description="In dbSNP:rs2293969." evidence="4">
    <original>S</original>
    <variation>L</variation>
    <location>
        <position position="12"/>
    </location>
</feature>
<feature type="mutagenesis site" description="Loss of phosphorylation. Suppresses interaction with YWHAG and induction of autophagy; when associated with A-288." evidence="7">
    <original>T</original>
    <variation>A</variation>
    <location>
        <position position="128"/>
    </location>
</feature>
<feature type="mutagenesis site" description="Phosphomimetic mutant. No effect on its interaction with YWHAG. Enhances interaction with YWHAG; when associated with T-288." evidence="7">
    <original>T</original>
    <variation>D</variation>
    <location>
        <position position="128"/>
    </location>
</feature>
<feature type="mutagenesis site" description="Loss of phosphorylation. Suppresses interaction with YWHAG and induction of autophagy; when associated with A-128." evidence="7">
    <original>S</original>
    <variation>A</variation>
    <location>
        <position position="288"/>
    </location>
</feature>
<feature type="mutagenesis site" description="Phosphomimetic mutant. No effect on its interaction with YWHAG. Enhances interaction with YWHAG; when associated with T-128." evidence="7">
    <original>S</original>
    <variation>D</variation>
    <location>
        <position position="288"/>
    </location>
</feature>
<feature type="sequence conflict" description="In Ref. 1; CAA55963." evidence="8" ref="1">
    <original>P</original>
    <variation>L</variation>
    <location>
        <position position="34"/>
    </location>
</feature>
<feature type="sequence conflict" description="In Ref. 1; CAA55963." evidence="8" ref="1">
    <original>N</original>
    <variation>K</variation>
    <location>
        <position position="163"/>
    </location>
</feature>
<reference key="1">
    <citation type="submission" date="1998-08" db="EMBL/GenBank/DDBJ databases">
        <authorList>
            <person name="Zeviani M."/>
        </authorList>
    </citation>
    <scope>NUCLEOTIDE SEQUENCE [MRNA]</scope>
    <source>
        <tissue>Brain</tissue>
    </source>
</reference>
<reference key="2">
    <citation type="journal article" date="2004" name="Nature">
        <title>DNA sequence and analysis of human chromosome 9.</title>
        <authorList>
            <person name="Humphray S.J."/>
            <person name="Oliver K."/>
            <person name="Hunt A.R."/>
            <person name="Plumb R.W."/>
            <person name="Loveland J.E."/>
            <person name="Howe K.L."/>
            <person name="Andrews T.D."/>
            <person name="Searle S."/>
            <person name="Hunt S.E."/>
            <person name="Scott C.E."/>
            <person name="Jones M.C."/>
            <person name="Ainscough R."/>
            <person name="Almeida J.P."/>
            <person name="Ambrose K.D."/>
            <person name="Ashwell R.I.S."/>
            <person name="Babbage A.K."/>
            <person name="Babbage S."/>
            <person name="Bagguley C.L."/>
            <person name="Bailey J."/>
            <person name="Banerjee R."/>
            <person name="Barker D.J."/>
            <person name="Barlow K.F."/>
            <person name="Bates K."/>
            <person name="Beasley H."/>
            <person name="Beasley O."/>
            <person name="Bird C.P."/>
            <person name="Bray-Allen S."/>
            <person name="Brown A.J."/>
            <person name="Brown J.Y."/>
            <person name="Burford D."/>
            <person name="Burrill W."/>
            <person name="Burton J."/>
            <person name="Carder C."/>
            <person name="Carter N.P."/>
            <person name="Chapman J.C."/>
            <person name="Chen Y."/>
            <person name="Clarke G."/>
            <person name="Clark S.Y."/>
            <person name="Clee C.M."/>
            <person name="Clegg S."/>
            <person name="Collier R.E."/>
            <person name="Corby N."/>
            <person name="Crosier M."/>
            <person name="Cummings A.T."/>
            <person name="Davies J."/>
            <person name="Dhami P."/>
            <person name="Dunn M."/>
            <person name="Dutta I."/>
            <person name="Dyer L.W."/>
            <person name="Earthrowl M.E."/>
            <person name="Faulkner L."/>
            <person name="Fleming C.J."/>
            <person name="Frankish A."/>
            <person name="Frankland J.A."/>
            <person name="French L."/>
            <person name="Fricker D.G."/>
            <person name="Garner P."/>
            <person name="Garnett J."/>
            <person name="Ghori J."/>
            <person name="Gilbert J.G.R."/>
            <person name="Glison C."/>
            <person name="Grafham D.V."/>
            <person name="Gribble S."/>
            <person name="Griffiths C."/>
            <person name="Griffiths-Jones S."/>
            <person name="Grocock R."/>
            <person name="Guy J."/>
            <person name="Hall R.E."/>
            <person name="Hammond S."/>
            <person name="Harley J.L."/>
            <person name="Harrison E.S.I."/>
            <person name="Hart E.A."/>
            <person name="Heath P.D."/>
            <person name="Henderson C.D."/>
            <person name="Hopkins B.L."/>
            <person name="Howard P.J."/>
            <person name="Howden P.J."/>
            <person name="Huckle E."/>
            <person name="Johnson C."/>
            <person name="Johnson D."/>
            <person name="Joy A.A."/>
            <person name="Kay M."/>
            <person name="Keenan S."/>
            <person name="Kershaw J.K."/>
            <person name="Kimberley A.M."/>
            <person name="King A."/>
            <person name="Knights A."/>
            <person name="Laird G.K."/>
            <person name="Langford C."/>
            <person name="Lawlor S."/>
            <person name="Leongamornlert D.A."/>
            <person name="Leversha M."/>
            <person name="Lloyd C."/>
            <person name="Lloyd D.M."/>
            <person name="Lovell J."/>
            <person name="Martin S."/>
            <person name="Mashreghi-Mohammadi M."/>
            <person name="Matthews L."/>
            <person name="McLaren S."/>
            <person name="McLay K.E."/>
            <person name="McMurray A."/>
            <person name="Milne S."/>
            <person name="Nickerson T."/>
            <person name="Nisbett J."/>
            <person name="Nordsiek G."/>
            <person name="Pearce A.V."/>
            <person name="Peck A.I."/>
            <person name="Porter K.M."/>
            <person name="Pandian R."/>
            <person name="Pelan S."/>
            <person name="Phillimore B."/>
            <person name="Povey S."/>
            <person name="Ramsey Y."/>
            <person name="Rand V."/>
            <person name="Scharfe M."/>
            <person name="Sehra H.K."/>
            <person name="Shownkeen R."/>
            <person name="Sims S.K."/>
            <person name="Skuce C.D."/>
            <person name="Smith M."/>
            <person name="Steward C.A."/>
            <person name="Swarbreck D."/>
            <person name="Sycamore N."/>
            <person name="Tester J."/>
            <person name="Thorpe A."/>
            <person name="Tracey A."/>
            <person name="Tromans A."/>
            <person name="Thomas D.W."/>
            <person name="Wall M."/>
            <person name="Wallis J.M."/>
            <person name="West A.P."/>
            <person name="Whitehead S.L."/>
            <person name="Willey D.L."/>
            <person name="Williams S.A."/>
            <person name="Wilming L."/>
            <person name="Wray P.W."/>
            <person name="Young L."/>
            <person name="Ashurst J.L."/>
            <person name="Coulson A."/>
            <person name="Blocker H."/>
            <person name="Durbin R.M."/>
            <person name="Sulston J.E."/>
            <person name="Hubbard T."/>
            <person name="Jackson M.J."/>
            <person name="Bentley D.R."/>
            <person name="Beck S."/>
            <person name="Rogers J."/>
            <person name="Dunham I."/>
        </authorList>
    </citation>
    <scope>NUCLEOTIDE SEQUENCE [LARGE SCALE GENOMIC DNA]</scope>
</reference>
<reference key="3">
    <citation type="journal article" date="2004" name="Genome Res.">
        <title>The status, quality, and expansion of the NIH full-length cDNA project: the Mammalian Gene Collection (MGC).</title>
        <authorList>
            <consortium name="The MGC Project Team"/>
        </authorList>
    </citation>
    <scope>NUCLEOTIDE SEQUENCE [LARGE SCALE MRNA]</scope>
    <scope>VARIANT LEU-12</scope>
    <source>
        <tissue>Brain</tissue>
        <tissue>Uterus</tissue>
    </source>
</reference>
<reference key="4">
    <citation type="journal article" date="1995" name="Genomics">
        <title>Chromosomal localization of mitochondrial transcription factor A (TCF6), single-stranded DNA-binding protein (SSBP), and endonuclease G (ENDOG), three human housekeeping genes involved in mitochondrial biogenesis.</title>
        <authorList>
            <person name="Tiranti V."/>
            <person name="Rossi E."/>
            <person name="Ruiz-Carrillo A."/>
            <person name="Rossi G."/>
            <person name="Rocchi M."/>
            <person name="Didonato S."/>
            <person name="Zuffardi O."/>
            <person name="Zeviani M."/>
        </authorList>
    </citation>
    <scope>NUCLEOTIDE SEQUENCE [MRNA] OF 75-297</scope>
    <source>
        <tissue>Brain</tissue>
    </source>
</reference>
<reference key="5">
    <citation type="journal article" date="2011" name="BMC Syst. Biol.">
        <title>Initial characterization of the human central proteome.</title>
        <authorList>
            <person name="Burkard T.R."/>
            <person name="Planyavsky M."/>
            <person name="Kaupe I."/>
            <person name="Breitwieser F.P."/>
            <person name="Buerckstuemmer T."/>
            <person name="Bennett K.L."/>
            <person name="Superti-Furga G."/>
            <person name="Colinge J."/>
        </authorList>
    </citation>
    <scope>IDENTIFICATION BY MASS SPECTROMETRY [LARGE SCALE ANALYSIS]</scope>
</reference>
<reference key="6">
    <citation type="journal article" date="2014" name="Nucleic Acids Res.">
        <title>Endonuclease G preferentially cleaves 5-hydroxymethylcytosine-modified DNA creating a substrate for recombination.</title>
        <authorList>
            <person name="Robertson A.B."/>
            <person name="Robertson J."/>
            <person name="Fusser M."/>
            <person name="Klungland A."/>
        </authorList>
    </citation>
    <scope>FUNCTION</scope>
</reference>
<reference key="7">
    <citation type="journal article" date="2018" name="Oncotarget">
        <title>Endonuclease G promotes mitochondrial genome cleavage and replication.</title>
        <authorList>
            <person name="Wiehe R.S."/>
            <person name="Gole B."/>
            <person name="Chatre L."/>
            <person name="Walther P."/>
            <person name="Calzia E."/>
            <person name="Ricchetti M."/>
            <person name="Wiesmueller L."/>
        </authorList>
    </citation>
    <scope>FUNCTION</scope>
</reference>
<reference key="8">
    <citation type="journal article" date="2021" name="Nat. Commun.">
        <title>Endonuclease G promotes autophagy by suppressing mTOR signaling and activating the DNA damage response.</title>
        <authorList>
            <person name="Wang W."/>
            <person name="Li J."/>
            <person name="Tan J."/>
            <person name="Wang M."/>
            <person name="Yang J."/>
            <person name="Zhang Z.M."/>
            <person name="Li C."/>
            <person name="Basnakian A.G."/>
            <person name="Tang H.W."/>
            <person name="Perrimon N."/>
            <person name="Zhou Q."/>
        </authorList>
    </citation>
    <scope>FUNCTION</scope>
    <scope>SUBCELLULAR LOCATION</scope>
    <scope>INTERACTION WITH YWHAG</scope>
    <scope>PHOSPHORYLATION AT THR-128 AND SER-288</scope>
    <scope>MUTAGENESIS OF THR-128 AND SER-288</scope>
</reference>
<sequence length="297" mass="32620">MRALRAGLTLASGAGLGAVVEGWRRRREDARAAPGLLGRLPVLPVAAAAELPPVPGGPRGPGELAKYGLPGLAQLKSRESYVLCYDPRTRGALWVVEQLRPERLRGDGDRRECDFREDDSVHAYHRATNADYRGSGFDRGHLAAAANHRWSQKAMDDTFYLSNVAPQVPHLNQNAWNNLEKYSRSLTRSYQNVYVCTGPLFLPRTEADGKSYVKYQVIGKNHVAVPTHFFKVLILEAAGGQIELRTYVMPNAPVDEAIPLERFLVPIESIERASGLLFVPNILARAGSLKAITAGSK</sequence>
<gene>
    <name type="primary">ENDOG</name>
</gene>